<evidence type="ECO:0000255" key="1">
    <source>
        <dbReference type="HAMAP-Rule" id="MF_00435"/>
    </source>
</evidence>
<evidence type="ECO:0000255" key="2">
    <source>
        <dbReference type="PROSITE-ProRule" id="PRU01197"/>
    </source>
</evidence>
<evidence type="ECO:0000255" key="3">
    <source>
        <dbReference type="PROSITE-ProRule" id="PRU01198"/>
    </source>
</evidence>
<gene>
    <name evidence="1" type="primary">ilvC</name>
    <name type="ordered locus">MUL_1949</name>
</gene>
<dbReference type="EC" id="1.1.1.86" evidence="1"/>
<dbReference type="EMBL" id="CP000325">
    <property type="protein sequence ID" value="ABL04402.1"/>
    <property type="molecule type" value="Genomic_DNA"/>
</dbReference>
<dbReference type="RefSeq" id="WP_011740021.1">
    <property type="nucleotide sequence ID" value="NC_008611.1"/>
</dbReference>
<dbReference type="SMR" id="A0PPY3"/>
<dbReference type="KEGG" id="mul:MUL_1949"/>
<dbReference type="eggNOG" id="COG0059">
    <property type="taxonomic scope" value="Bacteria"/>
</dbReference>
<dbReference type="HOGENOM" id="CLU_033821_0_1_11"/>
<dbReference type="UniPathway" id="UPA00047">
    <property type="reaction ID" value="UER00056"/>
</dbReference>
<dbReference type="UniPathway" id="UPA00049">
    <property type="reaction ID" value="UER00060"/>
</dbReference>
<dbReference type="Proteomes" id="UP000000765">
    <property type="component" value="Chromosome"/>
</dbReference>
<dbReference type="GO" id="GO:0005829">
    <property type="term" value="C:cytosol"/>
    <property type="evidence" value="ECO:0007669"/>
    <property type="project" value="TreeGrafter"/>
</dbReference>
<dbReference type="GO" id="GO:0004455">
    <property type="term" value="F:ketol-acid reductoisomerase activity"/>
    <property type="evidence" value="ECO:0007669"/>
    <property type="project" value="UniProtKB-UniRule"/>
</dbReference>
<dbReference type="GO" id="GO:0000287">
    <property type="term" value="F:magnesium ion binding"/>
    <property type="evidence" value="ECO:0007669"/>
    <property type="project" value="UniProtKB-UniRule"/>
</dbReference>
<dbReference type="GO" id="GO:0050661">
    <property type="term" value="F:NADP binding"/>
    <property type="evidence" value="ECO:0007669"/>
    <property type="project" value="InterPro"/>
</dbReference>
<dbReference type="GO" id="GO:0009097">
    <property type="term" value="P:isoleucine biosynthetic process"/>
    <property type="evidence" value="ECO:0007669"/>
    <property type="project" value="UniProtKB-UniRule"/>
</dbReference>
<dbReference type="GO" id="GO:0009099">
    <property type="term" value="P:L-valine biosynthetic process"/>
    <property type="evidence" value="ECO:0007669"/>
    <property type="project" value="UniProtKB-UniRule"/>
</dbReference>
<dbReference type="FunFam" id="3.40.50.720:FF:000023">
    <property type="entry name" value="Ketol-acid reductoisomerase (NADP(+))"/>
    <property type="match status" value="1"/>
</dbReference>
<dbReference type="Gene3D" id="6.10.240.10">
    <property type="match status" value="1"/>
</dbReference>
<dbReference type="Gene3D" id="3.40.50.720">
    <property type="entry name" value="NAD(P)-binding Rossmann-like Domain"/>
    <property type="match status" value="1"/>
</dbReference>
<dbReference type="HAMAP" id="MF_00435">
    <property type="entry name" value="IlvC"/>
    <property type="match status" value="1"/>
</dbReference>
<dbReference type="InterPro" id="IPR008927">
    <property type="entry name" value="6-PGluconate_DH-like_C_sf"/>
</dbReference>
<dbReference type="InterPro" id="IPR013023">
    <property type="entry name" value="KARI"/>
</dbReference>
<dbReference type="InterPro" id="IPR000506">
    <property type="entry name" value="KARI_C"/>
</dbReference>
<dbReference type="InterPro" id="IPR013116">
    <property type="entry name" value="KARI_N"/>
</dbReference>
<dbReference type="InterPro" id="IPR014359">
    <property type="entry name" value="KARI_prok"/>
</dbReference>
<dbReference type="InterPro" id="IPR036291">
    <property type="entry name" value="NAD(P)-bd_dom_sf"/>
</dbReference>
<dbReference type="NCBIfam" id="TIGR00465">
    <property type="entry name" value="ilvC"/>
    <property type="match status" value="1"/>
</dbReference>
<dbReference type="NCBIfam" id="NF004017">
    <property type="entry name" value="PRK05479.1"/>
    <property type="match status" value="1"/>
</dbReference>
<dbReference type="PANTHER" id="PTHR21371">
    <property type="entry name" value="KETOL-ACID REDUCTOISOMERASE, MITOCHONDRIAL"/>
    <property type="match status" value="1"/>
</dbReference>
<dbReference type="PANTHER" id="PTHR21371:SF1">
    <property type="entry name" value="KETOL-ACID REDUCTOISOMERASE, MITOCHONDRIAL"/>
    <property type="match status" value="1"/>
</dbReference>
<dbReference type="Pfam" id="PF01450">
    <property type="entry name" value="KARI_C"/>
    <property type="match status" value="1"/>
</dbReference>
<dbReference type="Pfam" id="PF07991">
    <property type="entry name" value="KARI_N"/>
    <property type="match status" value="1"/>
</dbReference>
<dbReference type="PIRSF" id="PIRSF000116">
    <property type="entry name" value="IlvC_gammaproteo"/>
    <property type="match status" value="1"/>
</dbReference>
<dbReference type="SUPFAM" id="SSF48179">
    <property type="entry name" value="6-phosphogluconate dehydrogenase C-terminal domain-like"/>
    <property type="match status" value="1"/>
</dbReference>
<dbReference type="SUPFAM" id="SSF51735">
    <property type="entry name" value="NAD(P)-binding Rossmann-fold domains"/>
    <property type="match status" value="1"/>
</dbReference>
<dbReference type="PROSITE" id="PS51851">
    <property type="entry name" value="KARI_C"/>
    <property type="match status" value="1"/>
</dbReference>
<dbReference type="PROSITE" id="PS51850">
    <property type="entry name" value="KARI_N"/>
    <property type="match status" value="1"/>
</dbReference>
<sequence length="333" mass="35947">MFYDDDADLSIIEGRKVGVIGYGSQGHAHSLSLRDSGVQVRVGLKEGSKSRAKVEEQGIEVDTPAKVAEWADVIMVLAPDTAQAEIFANDIEPNLKPGDALFFGHGLNVHFGLIKPPADVTVAMVAPKGPGHLVRRQFVDGKGVPCLIAVDQDPTGKGEALALSYAKAIGGTRAGVIKTTFKDETETDLFGEQAVLCGGTEELVKTGFDVMVEAGYPPEMAYFEVLHELKLIVDLMYEGGIARMNYSVSDTAEFGGYLSGPRVIDAGTKERMRAILRDIQSGDFVKKLVANVEGGNKQLEALRKENAEHSIEVTGKKLRDLMSWVDRPITETA</sequence>
<feature type="chain" id="PRO_1000050544" description="Ketol-acid reductoisomerase (NADP(+))">
    <location>
        <begin position="1"/>
        <end position="333"/>
    </location>
</feature>
<feature type="domain" description="KARI N-terminal Rossmann" evidence="2">
    <location>
        <begin position="1"/>
        <end position="179"/>
    </location>
</feature>
<feature type="domain" description="KARI C-terminal knotted" evidence="3">
    <location>
        <begin position="180"/>
        <end position="325"/>
    </location>
</feature>
<feature type="active site" evidence="1">
    <location>
        <position position="105"/>
    </location>
</feature>
<feature type="binding site" evidence="1">
    <location>
        <begin position="22"/>
        <end position="25"/>
    </location>
    <ligand>
        <name>NADP(+)</name>
        <dbReference type="ChEBI" id="CHEBI:58349"/>
    </ligand>
</feature>
<feature type="binding site" evidence="1">
    <location>
        <position position="45"/>
    </location>
    <ligand>
        <name>NADP(+)</name>
        <dbReference type="ChEBI" id="CHEBI:58349"/>
    </ligand>
</feature>
<feature type="binding site" evidence="1">
    <location>
        <position position="48"/>
    </location>
    <ligand>
        <name>NADP(+)</name>
        <dbReference type="ChEBI" id="CHEBI:58349"/>
    </ligand>
</feature>
<feature type="binding site" evidence="1">
    <location>
        <position position="50"/>
    </location>
    <ligand>
        <name>NADP(+)</name>
        <dbReference type="ChEBI" id="CHEBI:58349"/>
    </ligand>
</feature>
<feature type="binding site" evidence="1">
    <location>
        <begin position="80"/>
        <end position="83"/>
    </location>
    <ligand>
        <name>NADP(+)</name>
        <dbReference type="ChEBI" id="CHEBI:58349"/>
    </ligand>
</feature>
<feature type="binding site" evidence="1">
    <location>
        <position position="131"/>
    </location>
    <ligand>
        <name>NADP(+)</name>
        <dbReference type="ChEBI" id="CHEBI:58349"/>
    </ligand>
</feature>
<feature type="binding site" evidence="1">
    <location>
        <position position="188"/>
    </location>
    <ligand>
        <name>Mg(2+)</name>
        <dbReference type="ChEBI" id="CHEBI:18420"/>
        <label>1</label>
    </ligand>
</feature>
<feature type="binding site" evidence="1">
    <location>
        <position position="188"/>
    </location>
    <ligand>
        <name>Mg(2+)</name>
        <dbReference type="ChEBI" id="CHEBI:18420"/>
        <label>2</label>
    </ligand>
</feature>
<feature type="binding site" evidence="1">
    <location>
        <position position="192"/>
    </location>
    <ligand>
        <name>Mg(2+)</name>
        <dbReference type="ChEBI" id="CHEBI:18420"/>
        <label>1</label>
    </ligand>
</feature>
<feature type="binding site" evidence="1">
    <location>
        <position position="224"/>
    </location>
    <ligand>
        <name>Mg(2+)</name>
        <dbReference type="ChEBI" id="CHEBI:18420"/>
        <label>2</label>
    </ligand>
</feature>
<feature type="binding site" evidence="1">
    <location>
        <position position="228"/>
    </location>
    <ligand>
        <name>Mg(2+)</name>
        <dbReference type="ChEBI" id="CHEBI:18420"/>
        <label>2</label>
    </ligand>
</feature>
<feature type="binding site" evidence="1">
    <location>
        <position position="249"/>
    </location>
    <ligand>
        <name>substrate</name>
    </ligand>
</feature>
<comment type="function">
    <text evidence="1">Involved in the biosynthesis of branched-chain amino acids (BCAA). Catalyzes an alkyl-migration followed by a ketol-acid reduction of (S)-2-acetolactate (S2AL) to yield (R)-2,3-dihydroxy-isovalerate. In the isomerase reaction, S2AL is rearranged via a Mg-dependent methyl migration to produce 3-hydroxy-3-methyl-2-ketobutyrate (HMKB). In the reductase reaction, this 2-ketoacid undergoes a metal-dependent reduction by NADPH to yield (R)-2,3-dihydroxy-isovalerate.</text>
</comment>
<comment type="catalytic activity">
    <reaction evidence="1">
        <text>(2R)-2,3-dihydroxy-3-methylbutanoate + NADP(+) = (2S)-2-acetolactate + NADPH + H(+)</text>
        <dbReference type="Rhea" id="RHEA:22068"/>
        <dbReference type="ChEBI" id="CHEBI:15378"/>
        <dbReference type="ChEBI" id="CHEBI:49072"/>
        <dbReference type="ChEBI" id="CHEBI:57783"/>
        <dbReference type="ChEBI" id="CHEBI:58349"/>
        <dbReference type="ChEBI" id="CHEBI:58476"/>
        <dbReference type="EC" id="1.1.1.86"/>
    </reaction>
</comment>
<comment type="catalytic activity">
    <reaction evidence="1">
        <text>(2R,3R)-2,3-dihydroxy-3-methylpentanoate + NADP(+) = (S)-2-ethyl-2-hydroxy-3-oxobutanoate + NADPH + H(+)</text>
        <dbReference type="Rhea" id="RHEA:13493"/>
        <dbReference type="ChEBI" id="CHEBI:15378"/>
        <dbReference type="ChEBI" id="CHEBI:49256"/>
        <dbReference type="ChEBI" id="CHEBI:49258"/>
        <dbReference type="ChEBI" id="CHEBI:57783"/>
        <dbReference type="ChEBI" id="CHEBI:58349"/>
        <dbReference type="EC" id="1.1.1.86"/>
    </reaction>
</comment>
<comment type="cofactor">
    <cofactor evidence="1">
        <name>Mg(2+)</name>
        <dbReference type="ChEBI" id="CHEBI:18420"/>
    </cofactor>
    <text evidence="1">Binds 2 magnesium ions per subunit.</text>
</comment>
<comment type="pathway">
    <text evidence="1">Amino-acid biosynthesis; L-isoleucine biosynthesis; L-isoleucine from 2-oxobutanoate: step 2/4.</text>
</comment>
<comment type="pathway">
    <text evidence="1">Amino-acid biosynthesis; L-valine biosynthesis; L-valine from pyruvate: step 2/4.</text>
</comment>
<comment type="similarity">
    <text evidence="1">Belongs to the ketol-acid reductoisomerase family.</text>
</comment>
<proteinExistence type="inferred from homology"/>
<keyword id="KW-0028">Amino-acid biosynthesis</keyword>
<keyword id="KW-0100">Branched-chain amino acid biosynthesis</keyword>
<keyword id="KW-0460">Magnesium</keyword>
<keyword id="KW-0479">Metal-binding</keyword>
<keyword id="KW-0521">NADP</keyword>
<keyword id="KW-0560">Oxidoreductase</keyword>
<name>ILVC_MYCUA</name>
<protein>
    <recommendedName>
        <fullName evidence="1">Ketol-acid reductoisomerase (NADP(+))</fullName>
        <shortName evidence="1">KARI</shortName>
        <ecNumber evidence="1">1.1.1.86</ecNumber>
    </recommendedName>
    <alternativeName>
        <fullName evidence="1">Acetohydroxy-acid isomeroreductase</fullName>
        <shortName evidence="1">AHIR</shortName>
    </alternativeName>
    <alternativeName>
        <fullName evidence="1">Alpha-keto-beta-hydroxylacyl reductoisomerase</fullName>
    </alternativeName>
    <alternativeName>
        <fullName evidence="1">Ketol-acid reductoisomerase type 1</fullName>
    </alternativeName>
    <alternativeName>
        <fullName evidence="1">Ketol-acid reductoisomerase type I</fullName>
    </alternativeName>
</protein>
<reference key="1">
    <citation type="journal article" date="2007" name="Genome Res.">
        <title>Reductive evolution and niche adaptation inferred from the genome of Mycobacterium ulcerans, the causative agent of Buruli ulcer.</title>
        <authorList>
            <person name="Stinear T.P."/>
            <person name="Seemann T."/>
            <person name="Pidot S."/>
            <person name="Frigui W."/>
            <person name="Reysset G."/>
            <person name="Garnier T."/>
            <person name="Meurice G."/>
            <person name="Simon D."/>
            <person name="Bouchier C."/>
            <person name="Ma L."/>
            <person name="Tichit M."/>
            <person name="Porter J.L."/>
            <person name="Ryan J."/>
            <person name="Johnson P.D.R."/>
            <person name="Davies J.K."/>
            <person name="Jenkin G.A."/>
            <person name="Small P.L.C."/>
            <person name="Jones L.M."/>
            <person name="Tekaia F."/>
            <person name="Laval F."/>
            <person name="Daffe M."/>
            <person name="Parkhill J."/>
            <person name="Cole S.T."/>
        </authorList>
    </citation>
    <scope>NUCLEOTIDE SEQUENCE [LARGE SCALE GENOMIC DNA]</scope>
    <source>
        <strain>Agy99</strain>
    </source>
</reference>
<organism>
    <name type="scientific">Mycobacterium ulcerans (strain Agy99)</name>
    <dbReference type="NCBI Taxonomy" id="362242"/>
    <lineage>
        <taxon>Bacteria</taxon>
        <taxon>Bacillati</taxon>
        <taxon>Actinomycetota</taxon>
        <taxon>Actinomycetes</taxon>
        <taxon>Mycobacteriales</taxon>
        <taxon>Mycobacteriaceae</taxon>
        <taxon>Mycobacterium</taxon>
        <taxon>Mycobacterium ulcerans group</taxon>
    </lineage>
</organism>
<accession>A0PPY3</accession>